<organism>
    <name type="scientific">Homo sapiens</name>
    <name type="common">Human</name>
    <dbReference type="NCBI Taxonomy" id="9606"/>
    <lineage>
        <taxon>Eukaryota</taxon>
        <taxon>Metazoa</taxon>
        <taxon>Chordata</taxon>
        <taxon>Craniata</taxon>
        <taxon>Vertebrata</taxon>
        <taxon>Euteleostomi</taxon>
        <taxon>Mammalia</taxon>
        <taxon>Eutheria</taxon>
        <taxon>Euarchontoglires</taxon>
        <taxon>Primates</taxon>
        <taxon>Haplorrhini</taxon>
        <taxon>Catarrhini</taxon>
        <taxon>Hominidae</taxon>
        <taxon>Homo</taxon>
    </lineage>
</organism>
<sequence length="77" mass="8569">MNLRLCVQALLLLWLSLTAVCGGSLMPLPDGNGLEDGNVRHLVQPRGSRNGPGPWQGGRRKFRRQRPRLSHKGPMPF</sequence>
<dbReference type="EMBL" id="AB023493">
    <property type="protein sequence ID" value="BAA84975.1"/>
    <property type="molecule type" value="mRNA"/>
</dbReference>
<dbReference type="EMBL" id="AF179680">
    <property type="protein sequence ID" value="AAF25815.1"/>
    <property type="molecule type" value="Genomic_DNA"/>
</dbReference>
<dbReference type="EMBL" id="AL022162">
    <property type="status" value="NOT_ANNOTATED_CDS"/>
    <property type="molecule type" value="Genomic_DNA"/>
</dbReference>
<dbReference type="EMBL" id="BC021104">
    <property type="protein sequence ID" value="AAH21104.2"/>
    <property type="molecule type" value="mRNA"/>
</dbReference>
<dbReference type="CCDS" id="CCDS48165.1"/>
<dbReference type="RefSeq" id="NP_059109.3">
    <property type="nucleotide sequence ID" value="NM_017413.4"/>
</dbReference>
<dbReference type="PDB" id="8XQE">
    <property type="method" value="EM"/>
    <property type="resolution" value="3.48 A"/>
    <property type="chains" value="D=65-77"/>
</dbReference>
<dbReference type="PDB" id="8XQF">
    <property type="method" value="EM"/>
    <property type="resolution" value="3.13 A"/>
    <property type="chains" value="D=65-77"/>
</dbReference>
<dbReference type="PDB" id="8XZG">
    <property type="method" value="EM"/>
    <property type="resolution" value="3.20 A"/>
    <property type="chains" value="L=65-77"/>
</dbReference>
<dbReference type="PDB" id="8XZH">
    <property type="method" value="EM"/>
    <property type="resolution" value="2.60 A"/>
    <property type="chains" value="L=66-77"/>
</dbReference>
<dbReference type="PDB" id="8XZJ">
    <property type="method" value="EM"/>
    <property type="resolution" value="3.00 A"/>
    <property type="chains" value="L=66-77"/>
</dbReference>
<dbReference type="PDBsum" id="8XQE"/>
<dbReference type="PDBsum" id="8XQF"/>
<dbReference type="PDBsum" id="8XZG"/>
<dbReference type="PDBsum" id="8XZH"/>
<dbReference type="PDBsum" id="8XZJ"/>
<dbReference type="BMRB" id="Q9ULZ1"/>
<dbReference type="EMDB" id="EMD-38574"/>
<dbReference type="EMDB" id="EMD-38575"/>
<dbReference type="EMDB" id="EMD-38795"/>
<dbReference type="SMR" id="Q9ULZ1"/>
<dbReference type="BioGRID" id="114385">
    <property type="interactions" value="7"/>
</dbReference>
<dbReference type="FunCoup" id="Q9ULZ1">
    <property type="interactions" value="759"/>
</dbReference>
<dbReference type="IntAct" id="Q9ULZ1">
    <property type="interactions" value="2"/>
</dbReference>
<dbReference type="STRING" id="9606.ENSP00000391800"/>
<dbReference type="BindingDB" id="Q9ULZ1"/>
<dbReference type="BioMuta" id="APLN"/>
<dbReference type="MassIVE" id="Q9ULZ1"/>
<dbReference type="PeptideAtlas" id="Q9ULZ1"/>
<dbReference type="Antibodypedia" id="30097">
    <property type="antibodies" value="302 antibodies from 28 providers"/>
</dbReference>
<dbReference type="DNASU" id="8862"/>
<dbReference type="Ensembl" id="ENST00000429967.3">
    <property type="protein sequence ID" value="ENSP00000391800.2"/>
    <property type="gene ID" value="ENSG00000171388.12"/>
</dbReference>
<dbReference type="GeneID" id="8862"/>
<dbReference type="KEGG" id="hsa:8862"/>
<dbReference type="MANE-Select" id="ENST00000429967.3">
    <property type="protein sequence ID" value="ENSP00000391800.2"/>
    <property type="RefSeq nucleotide sequence ID" value="NM_017413.5"/>
    <property type="RefSeq protein sequence ID" value="NP_059109.3"/>
</dbReference>
<dbReference type="UCSC" id="uc004eus.4">
    <property type="organism name" value="human"/>
</dbReference>
<dbReference type="AGR" id="HGNC:16665"/>
<dbReference type="CTD" id="8862"/>
<dbReference type="DisGeNET" id="8862"/>
<dbReference type="GeneCards" id="APLN"/>
<dbReference type="HGNC" id="HGNC:16665">
    <property type="gene designation" value="APLN"/>
</dbReference>
<dbReference type="HPA" id="ENSG00000171388">
    <property type="expression patterns" value="Tissue enhanced (brain, placenta)"/>
</dbReference>
<dbReference type="MalaCards" id="APLN"/>
<dbReference type="MIM" id="300297">
    <property type="type" value="gene"/>
</dbReference>
<dbReference type="neXtProt" id="NX_Q9ULZ1"/>
<dbReference type="OpenTargets" id="ENSG00000171388"/>
<dbReference type="PharmGKB" id="PA134984493"/>
<dbReference type="VEuPathDB" id="HostDB:ENSG00000171388"/>
<dbReference type="GeneTree" id="ENSGT00390000014020"/>
<dbReference type="HOGENOM" id="CLU_198461_0_0_1"/>
<dbReference type="InParanoid" id="Q9ULZ1"/>
<dbReference type="OMA" id="GHRQNGW"/>
<dbReference type="OrthoDB" id="9892041at2759"/>
<dbReference type="PAN-GO" id="Q9ULZ1">
    <property type="GO annotations" value="1 GO annotation based on evolutionary models"/>
</dbReference>
<dbReference type="PhylomeDB" id="Q9ULZ1"/>
<dbReference type="TreeFam" id="TF339660"/>
<dbReference type="PathwayCommons" id="Q9ULZ1"/>
<dbReference type="Reactome" id="R-HSA-375276">
    <property type="pathway name" value="Peptide ligand-binding receptors"/>
</dbReference>
<dbReference type="Reactome" id="R-HSA-418594">
    <property type="pathway name" value="G alpha (i) signalling events"/>
</dbReference>
<dbReference type="SignaLink" id="Q9ULZ1"/>
<dbReference type="SIGNOR" id="Q9ULZ1"/>
<dbReference type="BioGRID-ORCS" id="8862">
    <property type="hits" value="3 hits in 736 CRISPR screens"/>
</dbReference>
<dbReference type="ChiTaRS" id="APLN">
    <property type="organism name" value="human"/>
</dbReference>
<dbReference type="GeneWiki" id="Apelin"/>
<dbReference type="GenomeRNAi" id="8862"/>
<dbReference type="Pharos" id="Q9ULZ1">
    <property type="development level" value="Tbio"/>
</dbReference>
<dbReference type="PRO" id="PR:Q9ULZ1"/>
<dbReference type="Proteomes" id="UP000005640">
    <property type="component" value="Chromosome X"/>
</dbReference>
<dbReference type="RNAct" id="Q9ULZ1">
    <property type="molecule type" value="protein"/>
</dbReference>
<dbReference type="Bgee" id="ENSG00000171388">
    <property type="expression patterns" value="Expressed in C1 segment of cervical spinal cord and 141 other cell types or tissues"/>
</dbReference>
<dbReference type="GO" id="GO:0005576">
    <property type="term" value="C:extracellular region"/>
    <property type="evidence" value="ECO:0000314"/>
    <property type="project" value="UniProtKB"/>
</dbReference>
<dbReference type="GO" id="GO:0005615">
    <property type="term" value="C:extracellular space"/>
    <property type="evidence" value="ECO:0000314"/>
    <property type="project" value="UniProt"/>
</dbReference>
<dbReference type="GO" id="GO:0048471">
    <property type="term" value="C:perinuclear region of cytoplasm"/>
    <property type="evidence" value="ECO:0007669"/>
    <property type="project" value="Ensembl"/>
</dbReference>
<dbReference type="GO" id="GO:0031704">
    <property type="term" value="F:apelin receptor binding"/>
    <property type="evidence" value="ECO:0000314"/>
    <property type="project" value="UniProtKB"/>
</dbReference>
<dbReference type="GO" id="GO:0005179">
    <property type="term" value="F:hormone activity"/>
    <property type="evidence" value="ECO:0000314"/>
    <property type="project" value="UniProt"/>
</dbReference>
<dbReference type="GO" id="GO:0042802">
    <property type="term" value="F:identical protein binding"/>
    <property type="evidence" value="ECO:0007669"/>
    <property type="project" value="Ensembl"/>
</dbReference>
<dbReference type="GO" id="GO:0005102">
    <property type="term" value="F:signaling receptor binding"/>
    <property type="evidence" value="ECO:0000304"/>
    <property type="project" value="ProtInc"/>
</dbReference>
<dbReference type="GO" id="GO:0001525">
    <property type="term" value="P:angiogenesis"/>
    <property type="evidence" value="ECO:0007669"/>
    <property type="project" value="UniProtKB-KW"/>
</dbReference>
<dbReference type="GO" id="GO:0060183">
    <property type="term" value="P:apelin receptor signaling pathway"/>
    <property type="evidence" value="ECO:0000314"/>
    <property type="project" value="UniProtKB"/>
</dbReference>
<dbReference type="GO" id="GO:0060976">
    <property type="term" value="P:coronary vasculature development"/>
    <property type="evidence" value="ECO:0000250"/>
    <property type="project" value="UniProtKB"/>
</dbReference>
<dbReference type="GO" id="GO:0042756">
    <property type="term" value="P:drinking behavior"/>
    <property type="evidence" value="ECO:0000250"/>
    <property type="project" value="UniProtKB"/>
</dbReference>
<dbReference type="GO" id="GO:0007369">
    <property type="term" value="P:gastrulation"/>
    <property type="evidence" value="ECO:0007669"/>
    <property type="project" value="UniProtKB-KW"/>
</dbReference>
<dbReference type="GO" id="GO:0006955">
    <property type="term" value="P:immune response"/>
    <property type="evidence" value="ECO:0000304"/>
    <property type="project" value="ProtInc"/>
</dbReference>
<dbReference type="GO" id="GO:0007595">
    <property type="term" value="P:lactation"/>
    <property type="evidence" value="ECO:0000304"/>
    <property type="project" value="ProtInc"/>
</dbReference>
<dbReference type="GO" id="GO:0045776">
    <property type="term" value="P:negative regulation of blood pressure"/>
    <property type="evidence" value="ECO:0000250"/>
    <property type="project" value="UniProtKB"/>
</dbReference>
<dbReference type="GO" id="GO:0040037">
    <property type="term" value="P:negative regulation of fibroblast growth factor receptor signaling pathway"/>
    <property type="evidence" value="ECO:0000316"/>
    <property type="project" value="BHF-UCL"/>
</dbReference>
<dbReference type="GO" id="GO:0010629">
    <property type="term" value="P:negative regulation of gene expression"/>
    <property type="evidence" value="ECO:0000316"/>
    <property type="project" value="BHF-UCL"/>
</dbReference>
<dbReference type="GO" id="GO:0003085">
    <property type="term" value="P:negative regulation of systemic arterial blood pressure"/>
    <property type="evidence" value="ECO:0007669"/>
    <property type="project" value="Ensembl"/>
</dbReference>
<dbReference type="GO" id="GO:1904706">
    <property type="term" value="P:negative regulation of vascular associated smooth muscle cell proliferation"/>
    <property type="evidence" value="ECO:0000315"/>
    <property type="project" value="BHF-UCL"/>
</dbReference>
<dbReference type="GO" id="GO:0045906">
    <property type="term" value="P:negative regulation of vasoconstriction"/>
    <property type="evidence" value="ECO:0007669"/>
    <property type="project" value="Ensembl"/>
</dbReference>
<dbReference type="GO" id="GO:0051461">
    <property type="term" value="P:positive regulation of corticotropin secretion"/>
    <property type="evidence" value="ECO:0007669"/>
    <property type="project" value="Ensembl"/>
</dbReference>
<dbReference type="GO" id="GO:0051466">
    <property type="term" value="P:positive regulation of corticotropin-releasing hormone secretion"/>
    <property type="evidence" value="ECO:0007669"/>
    <property type="project" value="Ensembl"/>
</dbReference>
<dbReference type="GO" id="GO:1904022">
    <property type="term" value="P:positive regulation of G protein-coupled receptor internalization"/>
    <property type="evidence" value="ECO:0000314"/>
    <property type="project" value="UniProtKB"/>
</dbReference>
<dbReference type="GO" id="GO:0045823">
    <property type="term" value="P:positive regulation of heart contraction"/>
    <property type="evidence" value="ECO:0000250"/>
    <property type="project" value="UniProtKB"/>
</dbReference>
<dbReference type="GO" id="GO:0010460">
    <property type="term" value="P:positive regulation of heart rate"/>
    <property type="evidence" value="ECO:0007669"/>
    <property type="project" value="Ensembl"/>
</dbReference>
<dbReference type="GO" id="GO:0031652">
    <property type="term" value="P:positive regulation of heat generation"/>
    <property type="evidence" value="ECO:0007669"/>
    <property type="project" value="Ensembl"/>
</dbReference>
<dbReference type="GO" id="GO:1902895">
    <property type="term" value="P:positive regulation of miRNA transcription"/>
    <property type="evidence" value="ECO:0000314"/>
    <property type="project" value="BHF-UCL"/>
</dbReference>
<dbReference type="GO" id="GO:0042327">
    <property type="term" value="P:positive regulation of phosphorylation"/>
    <property type="evidence" value="ECO:0007669"/>
    <property type="project" value="Ensembl"/>
</dbReference>
<dbReference type="GO" id="GO:1905564">
    <property type="term" value="P:positive regulation of vascular endothelial cell proliferation"/>
    <property type="evidence" value="ECO:0000314"/>
    <property type="project" value="BHF-UCL"/>
</dbReference>
<dbReference type="GO" id="GO:0002026">
    <property type="term" value="P:regulation of the force of heart contraction"/>
    <property type="evidence" value="ECO:0007669"/>
    <property type="project" value="Ensembl"/>
</dbReference>
<dbReference type="GO" id="GO:0007165">
    <property type="term" value="P:signal transduction"/>
    <property type="evidence" value="ECO:0000304"/>
    <property type="project" value="ProtInc"/>
</dbReference>
<dbReference type="InterPro" id="IPR026155">
    <property type="entry name" value="Apelin"/>
</dbReference>
<dbReference type="PANTHER" id="PTHR15953">
    <property type="entry name" value="APELIN"/>
    <property type="match status" value="1"/>
</dbReference>
<dbReference type="PANTHER" id="PTHR15953:SF0">
    <property type="entry name" value="APELIN"/>
    <property type="match status" value="1"/>
</dbReference>
<dbReference type="Pfam" id="PF15360">
    <property type="entry name" value="Apelin"/>
    <property type="match status" value="1"/>
</dbReference>
<comment type="function">
    <text evidence="2 3 4 8 11 12 13">Peptide hormone that functions as endogenous ligand for the G-protein-coupled apelin receptor (APLNR/APJ), that plays a role in cadiovascular homeostasis (PubMed:10525157, PubMed:22810587, PubMed:35817871, PubMed:38428423). Functions as a balanced agonist activating both G(i) protein pathway and beta-arrestin pathway of APLNR (PubMed:22810587, PubMed:38428423). Downstream G proteins activation, apelin can inhibit cAMP production and activate key intracellular effectors such as ERKs (PubMed:22810587, PubMed:35817871, PubMed:38428423). On the other hand, APLNR activation induces beta-arrestin recruitment to the membrane leading to desensitization and internalization of the receptor (PubMed:22810587, PubMed:38428423). Apelin blunts cardiac hypertrophic induction from APLNR on response to pathological stimuli, but also induces myocardial hypertrophy under normal conditions (PubMed:22810587, PubMed:38428423). Apelin-36 dissociates more hardly than (pyroglu)apelin-13 from APLNR (By similarity). Involved in the regulation of cardiac precursor cell movements during gastrulation and heart morphogenesis (By similarity). Has an inhibitory effect on cytokine production in response to T-cell receptor/CD3 cross-linking; the oral intake of apelin in the colostrum and the milk might therefore modulate immune responses in neonates (By similarity). Plays a role in early coronary blood vessels formation (By similarity). Mediates myocardial contractility in an ERK1/2-dependent manner (By similarity). May also have a role in the central control of body fluid homeostasis by influencing vasopressin release and drinking behavior (By similarity).</text>
</comment>
<comment type="function">
    <text evidence="10">(Microbial infection) Endogenous ligand for the apelin receptor (APLNR), an alternative coreceptor with CD4 for HIV-1 infection (PubMed:11090199). Inhibits HIV-1 entry in cells coexpressing CD4 and APLNR (PubMed:11090199). Apelin-36 has a greater inhibitory activity on HIV infection than other synthetic apelin derivatives (PubMed:11090199).</text>
</comment>
<comment type="subcellular location">
    <subcellularLocation>
        <location evidence="5">Secreted</location>
    </subcellularLocation>
    <subcellularLocation>
        <location evidence="11 13">Secreted</location>
        <location evidence="11 13">Extracellular space</location>
    </subcellularLocation>
    <text evidence="5">Abundantly secreted in the colostrum. Lower level in milk. Decreases rapidly within several days after parturition in milk, but is still detectable even in commercial milk.</text>
</comment>
<comment type="tissue specificity">
    <text evidence="9">Expressed in the brain with highest levels in the frontal cortex, thalamus, hypothalamus and midbrain (PubMed:10617103). Secreted by the mammary gland into the colostrum and the milk.</text>
</comment>
<comment type="PTM">
    <text evidence="5">Several active peptides may be produced by proteolytic processing of the peptide precursor.</text>
</comment>
<comment type="similarity">
    <text evidence="14">Belongs to the apelin family.</text>
</comment>
<protein>
    <recommendedName>
        <fullName>Apelin</fullName>
    </recommendedName>
    <alternativeName>
        <fullName>APJ endogenous ligand</fullName>
    </alternativeName>
    <component>
        <recommendedName>
            <fullName>Apelin-36</fullName>
        </recommendedName>
    </component>
    <component>
        <recommendedName>
            <fullName>Apelin-31</fullName>
        </recommendedName>
    </component>
    <component>
        <recommendedName>
            <fullName>Apelin-28</fullName>
        </recommendedName>
    </component>
    <component>
        <recommendedName>
            <fullName>Apelin-13</fullName>
        </recommendedName>
    </component>
</protein>
<accession>Q9ULZ1</accession>
<accession>Q4VY08</accession>
<accession>Q8WU89</accession>
<feature type="signal peptide" evidence="6">
    <location>
        <begin position="1"/>
        <end position="22"/>
    </location>
</feature>
<feature type="propeptide" id="PRO_0000001759" evidence="1">
    <location>
        <begin position="23"/>
        <end position="41"/>
    </location>
</feature>
<feature type="peptide" id="PRO_0000001760" description="Apelin-36" evidence="1">
    <location>
        <begin position="42"/>
        <end position="77"/>
    </location>
</feature>
<feature type="peptide" id="PRO_0000001761" description="Apelin-31" evidence="1">
    <location>
        <begin position="47"/>
        <end position="77"/>
    </location>
</feature>
<feature type="peptide" id="PRO_0000001762" description="Apelin-28" evidence="1">
    <location>
        <begin position="50"/>
        <end position="77"/>
    </location>
</feature>
<feature type="peptide" id="PRO_0000001763" description="Apelin-13" evidence="1">
    <location>
        <begin position="65"/>
        <end position="77"/>
    </location>
</feature>
<feature type="region of interest" description="Disordered" evidence="7">
    <location>
        <begin position="43"/>
        <end position="77"/>
    </location>
</feature>
<feature type="compositionally biased region" description="Basic residues" evidence="7">
    <location>
        <begin position="58"/>
        <end position="71"/>
    </location>
</feature>
<feature type="site" description="Important for the balance between G(i) and beta-arrestin pathways induced by apelin-13-APLNR system" evidence="13">
    <location>
        <position position="75"/>
    </location>
</feature>
<feature type="site" description="Important for the balance between G(i) and beta-arrestin pathways induced by apelin-13-APLNR system" evidence="13">
    <location>
        <position position="77"/>
    </location>
</feature>
<feature type="strand" evidence="19">
    <location>
        <begin position="67"/>
        <end position="74"/>
    </location>
</feature>
<reference key="1">
    <citation type="journal article" date="1998" name="Biochem. Biophys. Res. Commun.">
        <title>Isolation and characterization of a novel endogenous peptide ligand for the human APJ receptor.</title>
        <authorList>
            <person name="Tatemoto K."/>
            <person name="Hosoya M."/>
            <person name="Habata Y."/>
            <person name="Fujii R."/>
            <person name="Kakegawa T."/>
            <person name="Zou M.-X."/>
            <person name="Kawamata Y."/>
            <person name="Fukusumi S."/>
            <person name="Hinuma S."/>
            <person name="Kitada C."/>
            <person name="Kurokawa T."/>
            <person name="Onda H."/>
            <person name="Fujino M."/>
        </authorList>
    </citation>
    <scope>NUCLEOTIDE SEQUENCE [MRNA]</scope>
    <source>
        <tissue>Brain</tissue>
    </source>
</reference>
<reference key="2">
    <citation type="journal article" date="1999" name="Biochim. Biophys. Acta">
        <title>Apelin, the natural ligand of the orphan receptor APJ, is abundantly secreted in the colostrum.</title>
        <authorList>
            <person name="Habata Y."/>
            <person name="Fujii R."/>
            <person name="Hosoya M."/>
            <person name="Fukusumi S."/>
            <person name="Kawamata Y."/>
            <person name="Hinuma S."/>
            <person name="Kitada C."/>
            <person name="Nishizawa N."/>
            <person name="Murosaki S."/>
            <person name="Kurokawa T."/>
            <person name="Onda H."/>
            <person name="Tatemoto K."/>
            <person name="Fujino M."/>
        </authorList>
    </citation>
    <scope>NUCLEOTIDE SEQUENCE [MRNA]</scope>
    <scope>FUNCTION</scope>
    <source>
        <tissue>Brain</tissue>
    </source>
</reference>
<reference key="3">
    <citation type="journal article" date="2000" name="J. Neurochem.">
        <title>Characterization of apelin, the ligand for the APJ receptor.</title>
        <authorList>
            <person name="Lee D.K."/>
            <person name="Cheng R."/>
            <person name="Nguyen T."/>
            <person name="Fan T."/>
            <person name="Kariyawasam A.P."/>
            <person name="Liu Y."/>
            <person name="Osmond D.H."/>
            <person name="George S.R."/>
            <person name="O'Dowd B.F."/>
        </authorList>
    </citation>
    <scope>NUCLEOTIDE SEQUENCE [GENOMIC DNA]</scope>
    <scope>TISSUE SPECIFICITY</scope>
    <source>
        <tissue>Hypothalamus</tissue>
    </source>
</reference>
<reference key="4">
    <citation type="journal article" date="2005" name="Nature">
        <title>The DNA sequence of the human X chromosome.</title>
        <authorList>
            <person name="Ross M.T."/>
            <person name="Grafham D.V."/>
            <person name="Coffey A.J."/>
            <person name="Scherer S."/>
            <person name="McLay K."/>
            <person name="Muzny D."/>
            <person name="Platzer M."/>
            <person name="Howell G.R."/>
            <person name="Burrows C."/>
            <person name="Bird C.P."/>
            <person name="Frankish A."/>
            <person name="Lovell F.L."/>
            <person name="Howe K.L."/>
            <person name="Ashurst J.L."/>
            <person name="Fulton R.S."/>
            <person name="Sudbrak R."/>
            <person name="Wen G."/>
            <person name="Jones M.C."/>
            <person name="Hurles M.E."/>
            <person name="Andrews T.D."/>
            <person name="Scott C.E."/>
            <person name="Searle S."/>
            <person name="Ramser J."/>
            <person name="Whittaker A."/>
            <person name="Deadman R."/>
            <person name="Carter N.P."/>
            <person name="Hunt S.E."/>
            <person name="Chen R."/>
            <person name="Cree A."/>
            <person name="Gunaratne P."/>
            <person name="Havlak P."/>
            <person name="Hodgson A."/>
            <person name="Metzker M.L."/>
            <person name="Richards S."/>
            <person name="Scott G."/>
            <person name="Steffen D."/>
            <person name="Sodergren E."/>
            <person name="Wheeler D.A."/>
            <person name="Worley K.C."/>
            <person name="Ainscough R."/>
            <person name="Ambrose K.D."/>
            <person name="Ansari-Lari M.A."/>
            <person name="Aradhya S."/>
            <person name="Ashwell R.I."/>
            <person name="Babbage A.K."/>
            <person name="Bagguley C.L."/>
            <person name="Ballabio A."/>
            <person name="Banerjee R."/>
            <person name="Barker G.E."/>
            <person name="Barlow K.F."/>
            <person name="Barrett I.P."/>
            <person name="Bates K.N."/>
            <person name="Beare D.M."/>
            <person name="Beasley H."/>
            <person name="Beasley O."/>
            <person name="Beck A."/>
            <person name="Bethel G."/>
            <person name="Blechschmidt K."/>
            <person name="Brady N."/>
            <person name="Bray-Allen S."/>
            <person name="Bridgeman A.M."/>
            <person name="Brown A.J."/>
            <person name="Brown M.J."/>
            <person name="Bonnin D."/>
            <person name="Bruford E.A."/>
            <person name="Buhay C."/>
            <person name="Burch P."/>
            <person name="Burford D."/>
            <person name="Burgess J."/>
            <person name="Burrill W."/>
            <person name="Burton J."/>
            <person name="Bye J.M."/>
            <person name="Carder C."/>
            <person name="Carrel L."/>
            <person name="Chako J."/>
            <person name="Chapman J.C."/>
            <person name="Chavez D."/>
            <person name="Chen E."/>
            <person name="Chen G."/>
            <person name="Chen Y."/>
            <person name="Chen Z."/>
            <person name="Chinault C."/>
            <person name="Ciccodicola A."/>
            <person name="Clark S.Y."/>
            <person name="Clarke G."/>
            <person name="Clee C.M."/>
            <person name="Clegg S."/>
            <person name="Clerc-Blankenburg K."/>
            <person name="Clifford K."/>
            <person name="Cobley V."/>
            <person name="Cole C.G."/>
            <person name="Conquer J.S."/>
            <person name="Corby N."/>
            <person name="Connor R.E."/>
            <person name="David R."/>
            <person name="Davies J."/>
            <person name="Davis C."/>
            <person name="Davis J."/>
            <person name="Delgado O."/>
            <person name="Deshazo D."/>
            <person name="Dhami P."/>
            <person name="Ding Y."/>
            <person name="Dinh H."/>
            <person name="Dodsworth S."/>
            <person name="Draper H."/>
            <person name="Dugan-Rocha S."/>
            <person name="Dunham A."/>
            <person name="Dunn M."/>
            <person name="Durbin K.J."/>
            <person name="Dutta I."/>
            <person name="Eades T."/>
            <person name="Ellwood M."/>
            <person name="Emery-Cohen A."/>
            <person name="Errington H."/>
            <person name="Evans K.L."/>
            <person name="Faulkner L."/>
            <person name="Francis F."/>
            <person name="Frankland J."/>
            <person name="Fraser A.E."/>
            <person name="Galgoczy P."/>
            <person name="Gilbert J."/>
            <person name="Gill R."/>
            <person name="Gloeckner G."/>
            <person name="Gregory S.G."/>
            <person name="Gribble S."/>
            <person name="Griffiths C."/>
            <person name="Grocock R."/>
            <person name="Gu Y."/>
            <person name="Gwilliam R."/>
            <person name="Hamilton C."/>
            <person name="Hart E.A."/>
            <person name="Hawes A."/>
            <person name="Heath P.D."/>
            <person name="Heitmann K."/>
            <person name="Hennig S."/>
            <person name="Hernandez J."/>
            <person name="Hinzmann B."/>
            <person name="Ho S."/>
            <person name="Hoffs M."/>
            <person name="Howden P.J."/>
            <person name="Huckle E.J."/>
            <person name="Hume J."/>
            <person name="Hunt P.J."/>
            <person name="Hunt A.R."/>
            <person name="Isherwood J."/>
            <person name="Jacob L."/>
            <person name="Johnson D."/>
            <person name="Jones S."/>
            <person name="de Jong P.J."/>
            <person name="Joseph S.S."/>
            <person name="Keenan S."/>
            <person name="Kelly S."/>
            <person name="Kershaw J.K."/>
            <person name="Khan Z."/>
            <person name="Kioschis P."/>
            <person name="Klages S."/>
            <person name="Knights A.J."/>
            <person name="Kosiura A."/>
            <person name="Kovar-Smith C."/>
            <person name="Laird G.K."/>
            <person name="Langford C."/>
            <person name="Lawlor S."/>
            <person name="Leversha M."/>
            <person name="Lewis L."/>
            <person name="Liu W."/>
            <person name="Lloyd C."/>
            <person name="Lloyd D.M."/>
            <person name="Loulseged H."/>
            <person name="Loveland J.E."/>
            <person name="Lovell J.D."/>
            <person name="Lozado R."/>
            <person name="Lu J."/>
            <person name="Lyne R."/>
            <person name="Ma J."/>
            <person name="Maheshwari M."/>
            <person name="Matthews L.H."/>
            <person name="McDowall J."/>
            <person name="McLaren S."/>
            <person name="McMurray A."/>
            <person name="Meidl P."/>
            <person name="Meitinger T."/>
            <person name="Milne S."/>
            <person name="Miner G."/>
            <person name="Mistry S.L."/>
            <person name="Morgan M."/>
            <person name="Morris S."/>
            <person name="Mueller I."/>
            <person name="Mullikin J.C."/>
            <person name="Nguyen N."/>
            <person name="Nordsiek G."/>
            <person name="Nyakatura G."/>
            <person name="O'dell C.N."/>
            <person name="Okwuonu G."/>
            <person name="Palmer S."/>
            <person name="Pandian R."/>
            <person name="Parker D."/>
            <person name="Parrish J."/>
            <person name="Pasternak S."/>
            <person name="Patel D."/>
            <person name="Pearce A.V."/>
            <person name="Pearson D.M."/>
            <person name="Pelan S.E."/>
            <person name="Perez L."/>
            <person name="Porter K.M."/>
            <person name="Ramsey Y."/>
            <person name="Reichwald K."/>
            <person name="Rhodes S."/>
            <person name="Ridler K.A."/>
            <person name="Schlessinger D."/>
            <person name="Schueler M.G."/>
            <person name="Sehra H.K."/>
            <person name="Shaw-Smith C."/>
            <person name="Shen H."/>
            <person name="Sheridan E.M."/>
            <person name="Shownkeen R."/>
            <person name="Skuce C.D."/>
            <person name="Smith M.L."/>
            <person name="Sotheran E.C."/>
            <person name="Steingruber H.E."/>
            <person name="Steward C.A."/>
            <person name="Storey R."/>
            <person name="Swann R.M."/>
            <person name="Swarbreck D."/>
            <person name="Tabor P.E."/>
            <person name="Taudien S."/>
            <person name="Taylor T."/>
            <person name="Teague B."/>
            <person name="Thomas K."/>
            <person name="Thorpe A."/>
            <person name="Timms K."/>
            <person name="Tracey A."/>
            <person name="Trevanion S."/>
            <person name="Tromans A.C."/>
            <person name="d'Urso M."/>
            <person name="Verduzco D."/>
            <person name="Villasana D."/>
            <person name="Waldron L."/>
            <person name="Wall M."/>
            <person name="Wang Q."/>
            <person name="Warren J."/>
            <person name="Warry G.L."/>
            <person name="Wei X."/>
            <person name="West A."/>
            <person name="Whitehead S.L."/>
            <person name="Whiteley M.N."/>
            <person name="Wilkinson J.E."/>
            <person name="Willey D.L."/>
            <person name="Williams G."/>
            <person name="Williams L."/>
            <person name="Williamson A."/>
            <person name="Williamson H."/>
            <person name="Wilming L."/>
            <person name="Woodmansey R.L."/>
            <person name="Wray P.W."/>
            <person name="Yen J."/>
            <person name="Zhang J."/>
            <person name="Zhou J."/>
            <person name="Zoghbi H."/>
            <person name="Zorilla S."/>
            <person name="Buck D."/>
            <person name="Reinhardt R."/>
            <person name="Poustka A."/>
            <person name="Rosenthal A."/>
            <person name="Lehrach H."/>
            <person name="Meindl A."/>
            <person name="Minx P.J."/>
            <person name="Hillier L.W."/>
            <person name="Willard H.F."/>
            <person name="Wilson R.K."/>
            <person name="Waterston R.H."/>
            <person name="Rice C.M."/>
            <person name="Vaudin M."/>
            <person name="Coulson A."/>
            <person name="Nelson D.L."/>
            <person name="Weinstock G."/>
            <person name="Sulston J.E."/>
            <person name="Durbin R.M."/>
            <person name="Hubbard T."/>
            <person name="Gibbs R.A."/>
            <person name="Beck S."/>
            <person name="Rogers J."/>
            <person name="Bentley D.R."/>
        </authorList>
    </citation>
    <scope>NUCLEOTIDE SEQUENCE [LARGE SCALE GENOMIC DNA]</scope>
</reference>
<reference key="5">
    <citation type="journal article" date="2004" name="Genome Res.">
        <title>The status, quality, and expansion of the NIH full-length cDNA project: the Mammalian Gene Collection (MGC).</title>
        <authorList>
            <consortium name="The MGC Project Team"/>
        </authorList>
    </citation>
    <scope>NUCLEOTIDE SEQUENCE [LARGE SCALE MRNA]</scope>
    <source>
        <tissue>Kidney</tissue>
    </source>
</reference>
<reference key="6">
    <citation type="journal article" date="2000" name="J. Virol.">
        <title>Apelin, the natural ligand of the orphan seven-transmembrane receptor APJ, inhibits human immunodeficiency virus type 1 entry.</title>
        <authorList>
            <person name="Cayabyab M."/>
            <person name="Hinuma S."/>
            <person name="Farzan M."/>
            <person name="Choe H."/>
            <person name="Fukusumi S."/>
            <person name="Kitada C."/>
            <person name="Nishizawa N."/>
            <person name="Hosoya M."/>
            <person name="Nishimura O."/>
            <person name="Messele T."/>
            <person name="Pollakis G."/>
            <person name="Goudsmit J."/>
            <person name="Fujino M."/>
            <person name="Sodroski J."/>
        </authorList>
    </citation>
    <scope>FUNCTION (MICROBIAL INFECTION)</scope>
</reference>
<reference key="7">
    <citation type="journal article" date="2012" name="Nature">
        <title>APJ acts as a dual receptor in cardiac hypertrophy.</title>
        <authorList>
            <person name="Scimia M.C."/>
            <person name="Hurtado C."/>
            <person name="Ray S."/>
            <person name="Metzler S."/>
            <person name="Wei K."/>
            <person name="Wang J."/>
            <person name="Woods C.E."/>
            <person name="Purcell N.H."/>
            <person name="Catalucci D."/>
            <person name="Akasaka T."/>
            <person name="Bueno O.F."/>
            <person name="Vlasuk G.P."/>
            <person name="Kaliman P."/>
            <person name="Bodmer R."/>
            <person name="Smith L.H."/>
            <person name="Ashley E."/>
            <person name="Mercola M."/>
            <person name="Brown J.H."/>
            <person name="Ruiz-Lozano P."/>
        </authorList>
    </citation>
    <scope>FUNCTION</scope>
    <scope>SUBCELLULAR LOCATION</scope>
</reference>
<reference key="8">
    <citation type="journal article" date="2022" name="Nat. Struct. Mol. Biol.">
        <title>Structural insight into apelin receptor-G protein stoichiometry.</title>
        <authorList>
            <person name="Yue Y."/>
            <person name="Liu L."/>
            <person name="Wu L.J."/>
            <person name="Wu Y."/>
            <person name="Wang L."/>
            <person name="Li F."/>
            <person name="Liu J."/>
            <person name="Han G.W."/>
            <person name="Chen B."/>
            <person name="Lin X."/>
            <person name="Brouillette R.L."/>
            <person name="Breault E."/>
            <person name="Longpre J.M."/>
            <person name="Shi S."/>
            <person name="Lei H."/>
            <person name="Sarret P."/>
            <person name="Stevens R.C."/>
            <person name="Hanson M.A."/>
            <person name="Xu F."/>
        </authorList>
    </citation>
    <scope>FUNCTION</scope>
</reference>
<reference evidence="16 17 18" key="9">
    <citation type="journal article" date="2024" name="Cell">
        <title>Structure-based design of non-hypertrophic apelin receptor modulator.</title>
        <authorList>
            <person name="Wang W.W."/>
            <person name="Ji S.Y."/>
            <person name="Zhang W."/>
            <person name="Zhang J."/>
            <person name="Cai C."/>
            <person name="Hu R."/>
            <person name="Zang S.K."/>
            <person name="Miao L."/>
            <person name="Xu H."/>
            <person name="Chen L.N."/>
            <person name="Yang Z."/>
            <person name="Guo J."/>
            <person name="Qin J."/>
            <person name="Shen D.D."/>
            <person name="Liang P."/>
            <person name="Zhang Y."/>
            <person name="Zhang Y."/>
        </authorList>
    </citation>
    <scope>STRUCTURE BY ELECTRON MICROSCOPY (2.60 ANGSTROMS) OF 66-77 IN COMPLEX WITH APLNR AND G PROTEINS</scope>
    <scope>FUNCTION</scope>
    <scope>SUBCELLULAR LOCATION</scope>
</reference>
<name>APEL_HUMAN</name>
<proteinExistence type="evidence at protein level"/>
<evidence type="ECO:0000250" key="1"/>
<evidence type="ECO:0000250" key="2">
    <source>
        <dbReference type="UniProtKB" id="Q4TTN8"/>
    </source>
</evidence>
<evidence type="ECO:0000250" key="3">
    <source>
        <dbReference type="UniProtKB" id="Q9R0R3"/>
    </source>
</evidence>
<evidence type="ECO:0000250" key="4">
    <source>
        <dbReference type="UniProtKB" id="Q9R0R4"/>
    </source>
</evidence>
<evidence type="ECO:0000250" key="5">
    <source>
        <dbReference type="UniProtKB" id="Q9TUI9"/>
    </source>
</evidence>
<evidence type="ECO:0000255" key="6"/>
<evidence type="ECO:0000256" key="7">
    <source>
        <dbReference type="SAM" id="MobiDB-lite"/>
    </source>
</evidence>
<evidence type="ECO:0000269" key="8">
    <source>
    </source>
</evidence>
<evidence type="ECO:0000269" key="9">
    <source>
    </source>
</evidence>
<evidence type="ECO:0000269" key="10">
    <source>
    </source>
</evidence>
<evidence type="ECO:0000269" key="11">
    <source>
    </source>
</evidence>
<evidence type="ECO:0000269" key="12">
    <source>
    </source>
</evidence>
<evidence type="ECO:0000269" key="13">
    <source>
    </source>
</evidence>
<evidence type="ECO:0000305" key="14"/>
<evidence type="ECO:0000312" key="15">
    <source>
        <dbReference type="HGNC" id="HGNC:16665"/>
    </source>
</evidence>
<evidence type="ECO:0007744" key="16">
    <source>
        <dbReference type="PDB" id="8XZG"/>
    </source>
</evidence>
<evidence type="ECO:0007744" key="17">
    <source>
        <dbReference type="PDB" id="8XZH"/>
    </source>
</evidence>
<evidence type="ECO:0007744" key="18">
    <source>
        <dbReference type="PDB" id="8XZJ"/>
    </source>
</evidence>
<evidence type="ECO:0007829" key="19">
    <source>
        <dbReference type="PDB" id="8XZH"/>
    </source>
</evidence>
<keyword id="KW-0002">3D-structure</keyword>
<keyword id="KW-0037">Angiogenesis</keyword>
<keyword id="KW-0165">Cleavage on pair of basic residues</keyword>
<keyword id="KW-0217">Developmental protein</keyword>
<keyword id="KW-0306">Gastrulation</keyword>
<keyword id="KW-0372">Hormone</keyword>
<keyword id="KW-0945">Host-virus interaction</keyword>
<keyword id="KW-1267">Proteomics identification</keyword>
<keyword id="KW-1185">Reference proteome</keyword>
<keyword id="KW-0964">Secreted</keyword>
<keyword id="KW-0732">Signal</keyword>
<gene>
    <name evidence="15" type="primary">APLN</name>
    <name type="synonym">APEL</name>
</gene>